<name>RS17_PROMT</name>
<feature type="chain" id="PRO_0000233538" description="Small ribosomal subunit protein uS17">
    <location>
        <begin position="1"/>
        <end position="88"/>
    </location>
</feature>
<evidence type="ECO:0000255" key="1">
    <source>
        <dbReference type="HAMAP-Rule" id="MF_01345"/>
    </source>
</evidence>
<evidence type="ECO:0000305" key="2"/>
<gene>
    <name evidence="1" type="primary">rpsQ</name>
    <name evidence="1" type="synonym">rps17</name>
    <name type="ordered locus">PMN2A_1120</name>
</gene>
<protein>
    <recommendedName>
        <fullName evidence="1">Small ribosomal subunit protein uS17</fullName>
    </recommendedName>
    <alternativeName>
        <fullName evidence="2">30S ribosomal protein S17</fullName>
    </alternativeName>
</protein>
<reference key="1">
    <citation type="journal article" date="2007" name="PLoS Genet.">
        <title>Patterns and implications of gene gain and loss in the evolution of Prochlorococcus.</title>
        <authorList>
            <person name="Kettler G.C."/>
            <person name="Martiny A.C."/>
            <person name="Huang K."/>
            <person name="Zucker J."/>
            <person name="Coleman M.L."/>
            <person name="Rodrigue S."/>
            <person name="Chen F."/>
            <person name="Lapidus A."/>
            <person name="Ferriera S."/>
            <person name="Johnson J."/>
            <person name="Steglich C."/>
            <person name="Church G.M."/>
            <person name="Richardson P."/>
            <person name="Chisholm S.W."/>
        </authorList>
    </citation>
    <scope>NUCLEOTIDE SEQUENCE [LARGE SCALE GENOMIC DNA]</scope>
    <source>
        <strain>NATL2A</strain>
    </source>
</reference>
<accession>Q46IR8</accession>
<comment type="function">
    <text evidence="1">One of the primary rRNA binding proteins, it binds specifically to the 5'-end of 16S ribosomal RNA.</text>
</comment>
<comment type="subunit">
    <text evidence="1">Part of the 30S ribosomal subunit.</text>
</comment>
<comment type="similarity">
    <text evidence="1">Belongs to the universal ribosomal protein uS17 family.</text>
</comment>
<proteinExistence type="inferred from homology"/>
<dbReference type="EMBL" id="CP000095">
    <property type="protein sequence ID" value="AAZ58610.1"/>
    <property type="molecule type" value="Genomic_DNA"/>
</dbReference>
<dbReference type="RefSeq" id="WP_011295464.1">
    <property type="nucleotide sequence ID" value="NC_007335.2"/>
</dbReference>
<dbReference type="SMR" id="Q46IR8"/>
<dbReference type="STRING" id="59920.PMN2A_1120"/>
<dbReference type="KEGG" id="pmn:PMN2A_1120"/>
<dbReference type="HOGENOM" id="CLU_073626_1_2_3"/>
<dbReference type="OrthoDB" id="9811714at2"/>
<dbReference type="PhylomeDB" id="Q46IR8"/>
<dbReference type="Proteomes" id="UP000002535">
    <property type="component" value="Chromosome"/>
</dbReference>
<dbReference type="GO" id="GO:0022627">
    <property type="term" value="C:cytosolic small ribosomal subunit"/>
    <property type="evidence" value="ECO:0007669"/>
    <property type="project" value="TreeGrafter"/>
</dbReference>
<dbReference type="GO" id="GO:0019843">
    <property type="term" value="F:rRNA binding"/>
    <property type="evidence" value="ECO:0007669"/>
    <property type="project" value="UniProtKB-UniRule"/>
</dbReference>
<dbReference type="GO" id="GO:0003735">
    <property type="term" value="F:structural constituent of ribosome"/>
    <property type="evidence" value="ECO:0007669"/>
    <property type="project" value="InterPro"/>
</dbReference>
<dbReference type="GO" id="GO:0006412">
    <property type="term" value="P:translation"/>
    <property type="evidence" value="ECO:0007669"/>
    <property type="project" value="UniProtKB-UniRule"/>
</dbReference>
<dbReference type="CDD" id="cd00364">
    <property type="entry name" value="Ribosomal_uS17"/>
    <property type="match status" value="1"/>
</dbReference>
<dbReference type="Gene3D" id="2.40.50.140">
    <property type="entry name" value="Nucleic acid-binding proteins"/>
    <property type="match status" value="1"/>
</dbReference>
<dbReference type="HAMAP" id="MF_01345_B">
    <property type="entry name" value="Ribosomal_uS17_B"/>
    <property type="match status" value="1"/>
</dbReference>
<dbReference type="InterPro" id="IPR012340">
    <property type="entry name" value="NA-bd_OB-fold"/>
</dbReference>
<dbReference type="InterPro" id="IPR000266">
    <property type="entry name" value="Ribosomal_uS17"/>
</dbReference>
<dbReference type="InterPro" id="IPR019984">
    <property type="entry name" value="Ribosomal_uS17_bact/chlr"/>
</dbReference>
<dbReference type="NCBIfam" id="NF004123">
    <property type="entry name" value="PRK05610.1"/>
    <property type="match status" value="1"/>
</dbReference>
<dbReference type="NCBIfam" id="TIGR03635">
    <property type="entry name" value="uS17_bact"/>
    <property type="match status" value="1"/>
</dbReference>
<dbReference type="PANTHER" id="PTHR10744">
    <property type="entry name" value="40S RIBOSOMAL PROTEIN S11 FAMILY MEMBER"/>
    <property type="match status" value="1"/>
</dbReference>
<dbReference type="PANTHER" id="PTHR10744:SF1">
    <property type="entry name" value="SMALL RIBOSOMAL SUBUNIT PROTEIN US17M"/>
    <property type="match status" value="1"/>
</dbReference>
<dbReference type="Pfam" id="PF00366">
    <property type="entry name" value="Ribosomal_S17"/>
    <property type="match status" value="1"/>
</dbReference>
<dbReference type="PRINTS" id="PR00973">
    <property type="entry name" value="RIBOSOMALS17"/>
</dbReference>
<dbReference type="SUPFAM" id="SSF50249">
    <property type="entry name" value="Nucleic acid-binding proteins"/>
    <property type="match status" value="1"/>
</dbReference>
<sequence length="88" mass="10001">MALKEMVGTVVSDKMQKTVVVAVENRFPHPIYQKIISRTTRYKAHDAENHCKVGDRVRIKESPPISAHKRWTVTDVLVKGMKSKEAAK</sequence>
<keyword id="KW-1185">Reference proteome</keyword>
<keyword id="KW-0687">Ribonucleoprotein</keyword>
<keyword id="KW-0689">Ribosomal protein</keyword>
<keyword id="KW-0694">RNA-binding</keyword>
<keyword id="KW-0699">rRNA-binding</keyword>
<organism>
    <name type="scientific">Prochlorococcus marinus (strain NATL2A)</name>
    <dbReference type="NCBI Taxonomy" id="59920"/>
    <lineage>
        <taxon>Bacteria</taxon>
        <taxon>Bacillati</taxon>
        <taxon>Cyanobacteriota</taxon>
        <taxon>Cyanophyceae</taxon>
        <taxon>Synechococcales</taxon>
        <taxon>Prochlorococcaceae</taxon>
        <taxon>Prochlorococcus</taxon>
    </lineage>
</organism>